<gene>
    <name evidence="1" type="primary">greA</name>
    <name type="ordered locus">SCO4965</name>
    <name type="ORF">2SCK31.25c</name>
</gene>
<protein>
    <recommendedName>
        <fullName evidence="1">Transcription elongation factor GreA</fullName>
    </recommendedName>
    <alternativeName>
        <fullName evidence="1">Transcript cleavage factor GreA</fullName>
    </alternativeName>
</protein>
<feature type="chain" id="PRO_0000176978" description="Transcription elongation factor GreA">
    <location>
        <begin position="1"/>
        <end position="165"/>
    </location>
</feature>
<feature type="coiled-coil region" evidence="1">
    <location>
        <begin position="55"/>
        <end position="78"/>
    </location>
</feature>
<evidence type="ECO:0000255" key="1">
    <source>
        <dbReference type="HAMAP-Rule" id="MF_00105"/>
    </source>
</evidence>
<keyword id="KW-0175">Coiled coil</keyword>
<keyword id="KW-0238">DNA-binding</keyword>
<keyword id="KW-1185">Reference proteome</keyword>
<keyword id="KW-0804">Transcription</keyword>
<keyword id="KW-0805">Transcription regulation</keyword>
<organism>
    <name type="scientific">Streptomyces coelicolor (strain ATCC BAA-471 / A3(2) / M145)</name>
    <dbReference type="NCBI Taxonomy" id="100226"/>
    <lineage>
        <taxon>Bacteria</taxon>
        <taxon>Bacillati</taxon>
        <taxon>Actinomycetota</taxon>
        <taxon>Actinomycetes</taxon>
        <taxon>Kitasatosporales</taxon>
        <taxon>Streptomycetaceae</taxon>
        <taxon>Streptomyces</taxon>
        <taxon>Streptomyces albidoflavus group</taxon>
    </lineage>
</organism>
<dbReference type="EMBL" id="AL939122">
    <property type="protein sequence ID" value="CAD30950.1"/>
    <property type="molecule type" value="Genomic_DNA"/>
</dbReference>
<dbReference type="RefSeq" id="NP_629117.1">
    <property type="nucleotide sequence ID" value="NC_003888.3"/>
</dbReference>
<dbReference type="RefSeq" id="WP_003974011.1">
    <property type="nucleotide sequence ID" value="NZ_VNID01000027.1"/>
</dbReference>
<dbReference type="SMR" id="Q9ADK2"/>
<dbReference type="FunCoup" id="Q9ADK2">
    <property type="interactions" value="31"/>
</dbReference>
<dbReference type="STRING" id="100226.gene:17762614"/>
<dbReference type="PaxDb" id="100226-SCO4965"/>
<dbReference type="GeneID" id="91384070"/>
<dbReference type="KEGG" id="sco:SCO4965"/>
<dbReference type="PATRIC" id="fig|100226.15.peg.5045"/>
<dbReference type="eggNOG" id="COG0782">
    <property type="taxonomic scope" value="Bacteria"/>
</dbReference>
<dbReference type="HOGENOM" id="CLU_101379_0_0_11"/>
<dbReference type="InParanoid" id="Q9ADK2"/>
<dbReference type="OrthoDB" id="9797227at2"/>
<dbReference type="PhylomeDB" id="Q9ADK2"/>
<dbReference type="Proteomes" id="UP000001973">
    <property type="component" value="Chromosome"/>
</dbReference>
<dbReference type="GO" id="GO:0003677">
    <property type="term" value="F:DNA binding"/>
    <property type="evidence" value="ECO:0007669"/>
    <property type="project" value="UniProtKB-UniRule"/>
</dbReference>
<dbReference type="GO" id="GO:0070063">
    <property type="term" value="F:RNA polymerase binding"/>
    <property type="evidence" value="ECO:0007669"/>
    <property type="project" value="InterPro"/>
</dbReference>
<dbReference type="GO" id="GO:0006354">
    <property type="term" value="P:DNA-templated transcription elongation"/>
    <property type="evidence" value="ECO:0000318"/>
    <property type="project" value="GO_Central"/>
</dbReference>
<dbReference type="GO" id="GO:0032784">
    <property type="term" value="P:regulation of DNA-templated transcription elongation"/>
    <property type="evidence" value="ECO:0007669"/>
    <property type="project" value="UniProtKB-UniRule"/>
</dbReference>
<dbReference type="FunFam" id="1.10.287.180:FF:000001">
    <property type="entry name" value="Transcription elongation factor GreA"/>
    <property type="match status" value="1"/>
</dbReference>
<dbReference type="FunFam" id="3.10.50.30:FF:000005">
    <property type="entry name" value="Transcription elongation factor GreA"/>
    <property type="match status" value="1"/>
</dbReference>
<dbReference type="Gene3D" id="3.10.50.30">
    <property type="entry name" value="Transcription elongation factor, GreA/GreB, C-terminal domain"/>
    <property type="match status" value="1"/>
</dbReference>
<dbReference type="Gene3D" id="1.10.287.180">
    <property type="entry name" value="Transcription elongation factor, GreA/GreB, N-terminal domain"/>
    <property type="match status" value="1"/>
</dbReference>
<dbReference type="HAMAP" id="MF_00105">
    <property type="entry name" value="GreA_GreB"/>
    <property type="match status" value="1"/>
</dbReference>
<dbReference type="InterPro" id="IPR036953">
    <property type="entry name" value="GreA/GreB_C_sf"/>
</dbReference>
<dbReference type="InterPro" id="IPR018151">
    <property type="entry name" value="TF_GreA/GreB_CS"/>
</dbReference>
<dbReference type="InterPro" id="IPR006359">
    <property type="entry name" value="Tscrpt_elong_fac_GreA"/>
</dbReference>
<dbReference type="InterPro" id="IPR028624">
    <property type="entry name" value="Tscrpt_elong_fac_GreA/B"/>
</dbReference>
<dbReference type="InterPro" id="IPR001437">
    <property type="entry name" value="Tscrpt_elong_fac_GreA/B_C"/>
</dbReference>
<dbReference type="InterPro" id="IPR023459">
    <property type="entry name" value="Tscrpt_elong_fac_GreA/B_fam"/>
</dbReference>
<dbReference type="InterPro" id="IPR022691">
    <property type="entry name" value="Tscrpt_elong_fac_GreA/B_N"/>
</dbReference>
<dbReference type="InterPro" id="IPR036805">
    <property type="entry name" value="Tscrpt_elong_fac_GreA/B_N_sf"/>
</dbReference>
<dbReference type="NCBIfam" id="TIGR01462">
    <property type="entry name" value="greA"/>
    <property type="match status" value="1"/>
</dbReference>
<dbReference type="NCBIfam" id="NF001262">
    <property type="entry name" value="PRK00226.1-3"/>
    <property type="match status" value="1"/>
</dbReference>
<dbReference type="PANTHER" id="PTHR30437">
    <property type="entry name" value="TRANSCRIPTION ELONGATION FACTOR GREA"/>
    <property type="match status" value="1"/>
</dbReference>
<dbReference type="PANTHER" id="PTHR30437:SF4">
    <property type="entry name" value="TRANSCRIPTION ELONGATION FACTOR GREA"/>
    <property type="match status" value="1"/>
</dbReference>
<dbReference type="Pfam" id="PF01272">
    <property type="entry name" value="GreA_GreB"/>
    <property type="match status" value="1"/>
</dbReference>
<dbReference type="Pfam" id="PF03449">
    <property type="entry name" value="GreA_GreB_N"/>
    <property type="match status" value="1"/>
</dbReference>
<dbReference type="PIRSF" id="PIRSF006092">
    <property type="entry name" value="GreA_GreB"/>
    <property type="match status" value="1"/>
</dbReference>
<dbReference type="SUPFAM" id="SSF54534">
    <property type="entry name" value="FKBP-like"/>
    <property type="match status" value="1"/>
</dbReference>
<dbReference type="SUPFAM" id="SSF46557">
    <property type="entry name" value="GreA transcript cleavage protein, N-terminal domain"/>
    <property type="match status" value="1"/>
</dbReference>
<dbReference type="PROSITE" id="PS00829">
    <property type="entry name" value="GREAB_1"/>
    <property type="match status" value="1"/>
</dbReference>
<dbReference type="PROSITE" id="PS00830">
    <property type="entry name" value="GREAB_2"/>
    <property type="match status" value="1"/>
</dbReference>
<proteinExistence type="inferred from homology"/>
<name>GREA_STRCO</name>
<reference key="1">
    <citation type="journal article" date="2002" name="Nature">
        <title>Complete genome sequence of the model actinomycete Streptomyces coelicolor A3(2).</title>
        <authorList>
            <person name="Bentley S.D."/>
            <person name="Chater K.F."/>
            <person name="Cerdeno-Tarraga A.-M."/>
            <person name="Challis G.L."/>
            <person name="Thomson N.R."/>
            <person name="James K.D."/>
            <person name="Harris D.E."/>
            <person name="Quail M.A."/>
            <person name="Kieser H."/>
            <person name="Harper D."/>
            <person name="Bateman A."/>
            <person name="Brown S."/>
            <person name="Chandra G."/>
            <person name="Chen C.W."/>
            <person name="Collins M."/>
            <person name="Cronin A."/>
            <person name="Fraser A."/>
            <person name="Goble A."/>
            <person name="Hidalgo J."/>
            <person name="Hornsby T."/>
            <person name="Howarth S."/>
            <person name="Huang C.-H."/>
            <person name="Kieser T."/>
            <person name="Larke L."/>
            <person name="Murphy L.D."/>
            <person name="Oliver K."/>
            <person name="O'Neil S."/>
            <person name="Rabbinowitsch E."/>
            <person name="Rajandream M.A."/>
            <person name="Rutherford K.M."/>
            <person name="Rutter S."/>
            <person name="Seeger K."/>
            <person name="Saunders D."/>
            <person name="Sharp S."/>
            <person name="Squares R."/>
            <person name="Squares S."/>
            <person name="Taylor K."/>
            <person name="Warren T."/>
            <person name="Wietzorrek A."/>
            <person name="Woodward J.R."/>
            <person name="Barrell B.G."/>
            <person name="Parkhill J."/>
            <person name="Hopwood D.A."/>
        </authorList>
    </citation>
    <scope>NUCLEOTIDE SEQUENCE [LARGE SCALE GENOMIC DNA]</scope>
    <source>
        <strain>ATCC BAA-471 / A3(2) / M145</strain>
    </source>
</reference>
<comment type="function">
    <text evidence="1">Necessary for efficient RNA polymerase transcription elongation past template-encoded arresting sites. The arresting sites in DNA have the property of trapping a certain fraction of elongating RNA polymerases that pass through, resulting in locked ternary complexes. Cleavage of the nascent transcript by cleavage factors such as GreA or GreB allows the resumption of elongation from the new 3'terminus. GreA releases sequences of 2 to 3 nucleotides.</text>
</comment>
<comment type="similarity">
    <text evidence="1">Belongs to the GreA/GreB family.</text>
</comment>
<accession>Q9ADK2</accession>
<sequence length="165" mass="17843">MTQTSENVTWLTQEAYNKLKEELEYLTGPARTEISAKIAAAREEGDLRENGGYHAAKEEQGKQELRVRQLTQLLESAKVGEAPAADGVVAPGMVVTIAFDGDEDDTLTFLLASREYASSDIETYSPQSPLGSGVLGHKVGDDAQYELPNGKPASVRILKAEPYNG</sequence>